<protein>
    <recommendedName>
        <fullName evidence="1">8-amino-7-oxononanoate synthase</fullName>
        <shortName evidence="1">AONS</shortName>
        <ecNumber evidence="1">2.3.1.47</ecNumber>
    </recommendedName>
    <alternativeName>
        <fullName evidence="1">7-keto-8-amino-pelargonic acid synthase</fullName>
        <shortName evidence="1">7-KAP synthase</shortName>
        <shortName evidence="1">KAPA synthase</shortName>
    </alternativeName>
    <alternativeName>
        <fullName evidence="1">8-amino-7-ketopelargonate synthase</fullName>
    </alternativeName>
</protein>
<keyword id="KW-0012">Acyltransferase</keyword>
<keyword id="KW-0093">Biotin biosynthesis</keyword>
<keyword id="KW-0663">Pyridoxal phosphate</keyword>
<keyword id="KW-1185">Reference proteome</keyword>
<keyword id="KW-0808">Transferase</keyword>
<accession>Q7VL09</accession>
<name>BIOF_HAEDU</name>
<dbReference type="EC" id="2.3.1.47" evidence="1"/>
<dbReference type="EMBL" id="AE017143">
    <property type="protein sequence ID" value="AAP96450.1"/>
    <property type="molecule type" value="Genomic_DNA"/>
</dbReference>
<dbReference type="RefSeq" id="WP_010945482.1">
    <property type="nucleotide sequence ID" value="NC_002940.2"/>
</dbReference>
<dbReference type="SMR" id="Q7VL09"/>
<dbReference type="STRING" id="233412.HD_1684"/>
<dbReference type="KEGG" id="hdu:HD_1684"/>
<dbReference type="eggNOG" id="COG0156">
    <property type="taxonomic scope" value="Bacteria"/>
</dbReference>
<dbReference type="HOGENOM" id="CLU_015846_11_2_6"/>
<dbReference type="OrthoDB" id="9807157at2"/>
<dbReference type="UniPathway" id="UPA00078"/>
<dbReference type="Proteomes" id="UP000001022">
    <property type="component" value="Chromosome"/>
</dbReference>
<dbReference type="GO" id="GO:0008710">
    <property type="term" value="F:8-amino-7-oxononanoate synthase activity"/>
    <property type="evidence" value="ECO:0007669"/>
    <property type="project" value="UniProtKB-EC"/>
</dbReference>
<dbReference type="GO" id="GO:0030170">
    <property type="term" value="F:pyridoxal phosphate binding"/>
    <property type="evidence" value="ECO:0007669"/>
    <property type="project" value="InterPro"/>
</dbReference>
<dbReference type="GO" id="GO:0009102">
    <property type="term" value="P:biotin biosynthetic process"/>
    <property type="evidence" value="ECO:0007669"/>
    <property type="project" value="UniProtKB-UniPathway"/>
</dbReference>
<dbReference type="CDD" id="cd06454">
    <property type="entry name" value="KBL_like"/>
    <property type="match status" value="1"/>
</dbReference>
<dbReference type="Gene3D" id="3.90.1150.10">
    <property type="entry name" value="Aspartate Aminotransferase, domain 1"/>
    <property type="match status" value="1"/>
</dbReference>
<dbReference type="Gene3D" id="3.40.640.10">
    <property type="entry name" value="Type I PLP-dependent aspartate aminotransferase-like (Major domain)"/>
    <property type="match status" value="1"/>
</dbReference>
<dbReference type="InterPro" id="IPR001917">
    <property type="entry name" value="Aminotrans_II_pyridoxalP_BS"/>
</dbReference>
<dbReference type="InterPro" id="IPR004839">
    <property type="entry name" value="Aminotransferase_I/II_large"/>
</dbReference>
<dbReference type="InterPro" id="IPR050087">
    <property type="entry name" value="AON_synthase_class-II"/>
</dbReference>
<dbReference type="InterPro" id="IPR015424">
    <property type="entry name" value="PyrdxlP-dep_Trfase"/>
</dbReference>
<dbReference type="InterPro" id="IPR015421">
    <property type="entry name" value="PyrdxlP-dep_Trfase_major"/>
</dbReference>
<dbReference type="InterPro" id="IPR015422">
    <property type="entry name" value="PyrdxlP-dep_Trfase_small"/>
</dbReference>
<dbReference type="PANTHER" id="PTHR13693:SF100">
    <property type="entry name" value="8-AMINO-7-OXONONANOATE SYNTHASE"/>
    <property type="match status" value="1"/>
</dbReference>
<dbReference type="PANTHER" id="PTHR13693">
    <property type="entry name" value="CLASS II AMINOTRANSFERASE/8-AMINO-7-OXONONANOATE SYNTHASE"/>
    <property type="match status" value="1"/>
</dbReference>
<dbReference type="Pfam" id="PF00155">
    <property type="entry name" value="Aminotran_1_2"/>
    <property type="match status" value="1"/>
</dbReference>
<dbReference type="SUPFAM" id="SSF53383">
    <property type="entry name" value="PLP-dependent transferases"/>
    <property type="match status" value="1"/>
</dbReference>
<dbReference type="PROSITE" id="PS00599">
    <property type="entry name" value="AA_TRANSFER_CLASS_2"/>
    <property type="match status" value="1"/>
</dbReference>
<organism>
    <name type="scientific">Haemophilus ducreyi (strain 35000HP / ATCC 700724)</name>
    <dbReference type="NCBI Taxonomy" id="233412"/>
    <lineage>
        <taxon>Bacteria</taxon>
        <taxon>Pseudomonadati</taxon>
        <taxon>Pseudomonadota</taxon>
        <taxon>Gammaproteobacteria</taxon>
        <taxon>Pasteurellales</taxon>
        <taxon>Pasteurellaceae</taxon>
        <taxon>Haemophilus</taxon>
    </lineage>
</organism>
<sequence>MSYFAEKLAELAQVGLNRSLPEIEHQGKWIIAQNRKMLNFSSNDYLGLASDTELQQTFLQNILQEAPLHQWFSSSSSRLLTGNFPIYARLEQLLAQRFQRETALLFNSGYHANIGILPALVDKHSLILADKLVHASLIDGTRLAGCDFYRYQHNNLAHLTQLLEKHTGQYRRIIIVTESVFSMDGDVAPLPQLVALKKAFSSQTEVMLYVDEAHAIGVYGANGLGMAEFFDCIDDIDLLVGTFGKALASMGAYLICDQLIKQYLVNTMRPLIFSTALAPINVAWTHFLFEKLPQFQPKRAHLARLSQQLKQAVELRNGDTLATQSCIVPFVVGENRQAVEKSQYLQQQGYYCLPIRPPTVPKGTARIRFSLTADLTEAELNGLIACL</sequence>
<proteinExistence type="inferred from homology"/>
<reference key="1">
    <citation type="submission" date="2003-06" db="EMBL/GenBank/DDBJ databases">
        <title>The complete genome sequence of Haemophilus ducreyi.</title>
        <authorList>
            <person name="Munson R.S. Jr."/>
            <person name="Ray W.C."/>
            <person name="Mahairas G."/>
            <person name="Sabo P."/>
            <person name="Mungur R."/>
            <person name="Johnson L."/>
            <person name="Nguyen D."/>
            <person name="Wang J."/>
            <person name="Forst C."/>
            <person name="Hood L."/>
        </authorList>
    </citation>
    <scope>NUCLEOTIDE SEQUENCE [LARGE SCALE GENOMIC DNA]</scope>
    <source>
        <strain>35000HP / ATCC 700724</strain>
    </source>
</reference>
<evidence type="ECO:0000250" key="1">
    <source>
        <dbReference type="UniProtKB" id="P12998"/>
    </source>
</evidence>
<gene>
    <name evidence="1" type="primary">bioF</name>
    <name type="ordered locus">HD_1684</name>
</gene>
<comment type="function">
    <text evidence="1">Catalyzes the decarboxylative condensation of pimeloyl-[acyl-carrier protein] and L-alanine to produce 8-amino-7-oxononanoate (AON), [acyl-carrier protein], and carbon dioxide.</text>
</comment>
<comment type="catalytic activity">
    <reaction evidence="1">
        <text>6-carboxyhexanoyl-[ACP] + L-alanine + H(+) = (8S)-8-amino-7-oxononanoate + holo-[ACP] + CO2</text>
        <dbReference type="Rhea" id="RHEA:42288"/>
        <dbReference type="Rhea" id="RHEA-COMP:9685"/>
        <dbReference type="Rhea" id="RHEA-COMP:9955"/>
        <dbReference type="ChEBI" id="CHEBI:15378"/>
        <dbReference type="ChEBI" id="CHEBI:16526"/>
        <dbReference type="ChEBI" id="CHEBI:57972"/>
        <dbReference type="ChEBI" id="CHEBI:64479"/>
        <dbReference type="ChEBI" id="CHEBI:78846"/>
        <dbReference type="ChEBI" id="CHEBI:149468"/>
        <dbReference type="EC" id="2.3.1.47"/>
    </reaction>
</comment>
<comment type="cofactor">
    <cofactor evidence="1">
        <name>pyridoxal 5'-phosphate</name>
        <dbReference type="ChEBI" id="CHEBI:597326"/>
    </cofactor>
</comment>
<comment type="pathway">
    <text evidence="1">Cofactor biosynthesis; biotin biosynthesis.</text>
</comment>
<comment type="subunit">
    <text evidence="1">Homodimer.</text>
</comment>
<comment type="similarity">
    <text evidence="1">Belongs to the class-II pyridoxal-phosphate-dependent aminotransferase family. BioF subfamily.</text>
</comment>
<feature type="chain" id="PRO_0000381003" description="8-amino-7-oxononanoate synthase">
    <location>
        <begin position="1"/>
        <end position="387"/>
    </location>
</feature>
<feature type="binding site" evidence="1">
    <location>
        <begin position="109"/>
        <end position="110"/>
    </location>
    <ligand>
        <name>pyridoxal 5'-phosphate</name>
        <dbReference type="ChEBI" id="CHEBI:597326"/>
    </ligand>
</feature>
<feature type="binding site" evidence="1">
    <location>
        <position position="134"/>
    </location>
    <ligand>
        <name>substrate</name>
    </ligand>
</feature>
<feature type="binding site" evidence="1">
    <location>
        <position position="182"/>
    </location>
    <ligand>
        <name>pyridoxal 5'-phosphate</name>
        <dbReference type="ChEBI" id="CHEBI:597326"/>
    </ligand>
</feature>
<feature type="binding site" evidence="1">
    <location>
        <position position="214"/>
    </location>
    <ligand>
        <name>pyridoxal 5'-phosphate</name>
        <dbReference type="ChEBI" id="CHEBI:597326"/>
    </ligand>
</feature>
<feature type="binding site" evidence="1">
    <location>
        <position position="242"/>
    </location>
    <ligand>
        <name>pyridoxal 5'-phosphate</name>
        <dbReference type="ChEBI" id="CHEBI:597326"/>
    </ligand>
</feature>
<feature type="binding site" evidence="1">
    <location>
        <position position="359"/>
    </location>
    <ligand>
        <name>substrate</name>
    </ligand>
</feature>
<feature type="modified residue" description="N6-(pyridoxal phosphate)lysine" evidence="1">
    <location>
        <position position="245"/>
    </location>
</feature>